<protein>
    <recommendedName>
        <fullName evidence="1">A-type ATP synthase subunit A</fullName>
        <ecNumber evidence="1">7.1.2.2</ecNumber>
    </recommendedName>
</protein>
<feature type="chain" id="PRO_0000144592" description="A-type ATP synthase subunit A">
    <location>
        <begin position="1"/>
        <end position="581"/>
    </location>
</feature>
<feature type="binding site" evidence="1">
    <location>
        <begin position="234"/>
        <end position="241"/>
    </location>
    <ligand>
        <name>ATP</name>
        <dbReference type="ChEBI" id="CHEBI:30616"/>
    </ligand>
</feature>
<dbReference type="EC" id="7.1.2.2" evidence="1"/>
<dbReference type="EMBL" id="AE000782">
    <property type="protein sequence ID" value="AAB90074.1"/>
    <property type="molecule type" value="Genomic_DNA"/>
</dbReference>
<dbReference type="PIR" id="E69395">
    <property type="entry name" value="E69395"/>
</dbReference>
<dbReference type="RefSeq" id="WP_010878662.1">
    <property type="nucleotide sequence ID" value="NC_000917.1"/>
</dbReference>
<dbReference type="SMR" id="O29101"/>
<dbReference type="STRING" id="224325.AF_1166"/>
<dbReference type="PaxDb" id="224325-AF_1166"/>
<dbReference type="EnsemblBacteria" id="AAB90074">
    <property type="protein sequence ID" value="AAB90074"/>
    <property type="gene ID" value="AF_1166"/>
</dbReference>
<dbReference type="KEGG" id="afu:AF_1166"/>
<dbReference type="eggNOG" id="arCOG00868">
    <property type="taxonomic scope" value="Archaea"/>
</dbReference>
<dbReference type="HOGENOM" id="CLU_008162_3_1_2"/>
<dbReference type="OrthoDB" id="115235at2157"/>
<dbReference type="PhylomeDB" id="O29101"/>
<dbReference type="Proteomes" id="UP000002199">
    <property type="component" value="Chromosome"/>
</dbReference>
<dbReference type="GO" id="GO:0005886">
    <property type="term" value="C:plasma membrane"/>
    <property type="evidence" value="ECO:0007669"/>
    <property type="project" value="UniProtKB-SubCell"/>
</dbReference>
<dbReference type="GO" id="GO:0033178">
    <property type="term" value="C:proton-transporting two-sector ATPase complex, catalytic domain"/>
    <property type="evidence" value="ECO:0007669"/>
    <property type="project" value="InterPro"/>
</dbReference>
<dbReference type="GO" id="GO:0005524">
    <property type="term" value="F:ATP binding"/>
    <property type="evidence" value="ECO:0007669"/>
    <property type="project" value="UniProtKB-UniRule"/>
</dbReference>
<dbReference type="GO" id="GO:0046933">
    <property type="term" value="F:proton-transporting ATP synthase activity, rotational mechanism"/>
    <property type="evidence" value="ECO:0007669"/>
    <property type="project" value="UniProtKB-UniRule"/>
</dbReference>
<dbReference type="GO" id="GO:0046961">
    <property type="term" value="F:proton-transporting ATPase activity, rotational mechanism"/>
    <property type="evidence" value="ECO:0007669"/>
    <property type="project" value="InterPro"/>
</dbReference>
<dbReference type="GO" id="GO:0042777">
    <property type="term" value="P:proton motive force-driven plasma membrane ATP synthesis"/>
    <property type="evidence" value="ECO:0007669"/>
    <property type="project" value="UniProtKB-UniRule"/>
</dbReference>
<dbReference type="CDD" id="cd18111">
    <property type="entry name" value="ATP-synt_V_A-type_alpha_C"/>
    <property type="match status" value="1"/>
</dbReference>
<dbReference type="CDD" id="cd18119">
    <property type="entry name" value="ATP-synt_V_A-type_alpha_N"/>
    <property type="match status" value="1"/>
</dbReference>
<dbReference type="CDD" id="cd01134">
    <property type="entry name" value="V_A-ATPase_A"/>
    <property type="match status" value="1"/>
</dbReference>
<dbReference type="FunFam" id="3.40.50.300:FF:000675">
    <property type="entry name" value="V-type ATP synthase alpha chain"/>
    <property type="match status" value="1"/>
</dbReference>
<dbReference type="FunFam" id="2.40.50.100:FF:000008">
    <property type="entry name" value="V-type proton ATPase catalytic subunit A"/>
    <property type="match status" value="1"/>
</dbReference>
<dbReference type="Gene3D" id="2.40.30.20">
    <property type="match status" value="1"/>
</dbReference>
<dbReference type="Gene3D" id="2.40.50.100">
    <property type="match status" value="1"/>
</dbReference>
<dbReference type="Gene3D" id="1.10.1140.10">
    <property type="entry name" value="Bovine Mitochondrial F1-atpase, Atp Synthase Beta Chain, Chain D, domain 3"/>
    <property type="match status" value="1"/>
</dbReference>
<dbReference type="Gene3D" id="3.40.50.300">
    <property type="entry name" value="P-loop containing nucleotide triphosphate hydrolases"/>
    <property type="match status" value="1"/>
</dbReference>
<dbReference type="HAMAP" id="MF_00309">
    <property type="entry name" value="ATP_synth_A_arch"/>
    <property type="match status" value="1"/>
</dbReference>
<dbReference type="InterPro" id="IPR055190">
    <property type="entry name" value="ATP-synt_VA_C"/>
</dbReference>
<dbReference type="InterPro" id="IPR031686">
    <property type="entry name" value="ATP-synth_a_Xtn"/>
</dbReference>
<dbReference type="InterPro" id="IPR023366">
    <property type="entry name" value="ATP_synth_asu-like_sf"/>
</dbReference>
<dbReference type="InterPro" id="IPR005726">
    <property type="entry name" value="ATP_synth_asu_arc"/>
</dbReference>
<dbReference type="InterPro" id="IPR020003">
    <property type="entry name" value="ATPase_a/bsu_AS"/>
</dbReference>
<dbReference type="InterPro" id="IPR004100">
    <property type="entry name" value="ATPase_F1/V1/A1_a/bsu_N"/>
</dbReference>
<dbReference type="InterPro" id="IPR036121">
    <property type="entry name" value="ATPase_F1/V1/A1_a/bsu_N_sf"/>
</dbReference>
<dbReference type="InterPro" id="IPR000194">
    <property type="entry name" value="ATPase_F1/V1/A1_a/bsu_nucl-bd"/>
</dbReference>
<dbReference type="InterPro" id="IPR024034">
    <property type="entry name" value="ATPase_F1/V1_b/a_C"/>
</dbReference>
<dbReference type="InterPro" id="IPR027417">
    <property type="entry name" value="P-loop_NTPase"/>
</dbReference>
<dbReference type="InterPro" id="IPR022878">
    <property type="entry name" value="V-ATPase_asu"/>
</dbReference>
<dbReference type="NCBIfam" id="TIGR01043">
    <property type="entry name" value="ATP_syn_A_arch"/>
    <property type="match status" value="1"/>
</dbReference>
<dbReference type="NCBIfam" id="NF003220">
    <property type="entry name" value="PRK04192.1"/>
    <property type="match status" value="1"/>
</dbReference>
<dbReference type="PANTHER" id="PTHR43607:SF1">
    <property type="entry name" value="H(+)-TRANSPORTING TWO-SECTOR ATPASE"/>
    <property type="match status" value="1"/>
</dbReference>
<dbReference type="PANTHER" id="PTHR43607">
    <property type="entry name" value="V-TYPE PROTON ATPASE CATALYTIC SUBUNIT A"/>
    <property type="match status" value="1"/>
</dbReference>
<dbReference type="Pfam" id="PF00006">
    <property type="entry name" value="ATP-synt_ab"/>
    <property type="match status" value="1"/>
</dbReference>
<dbReference type="Pfam" id="PF02874">
    <property type="entry name" value="ATP-synt_ab_N"/>
    <property type="match status" value="1"/>
</dbReference>
<dbReference type="Pfam" id="PF16886">
    <property type="entry name" value="ATP-synt_ab_Xtn"/>
    <property type="match status" value="1"/>
</dbReference>
<dbReference type="Pfam" id="PF22919">
    <property type="entry name" value="ATP-synt_VA_C"/>
    <property type="match status" value="1"/>
</dbReference>
<dbReference type="SUPFAM" id="SSF47917">
    <property type="entry name" value="C-terminal domain of alpha and beta subunits of F1 ATP synthase"/>
    <property type="match status" value="1"/>
</dbReference>
<dbReference type="SUPFAM" id="SSF50615">
    <property type="entry name" value="N-terminal domain of alpha and beta subunits of F1 ATP synthase"/>
    <property type="match status" value="1"/>
</dbReference>
<dbReference type="SUPFAM" id="SSF52540">
    <property type="entry name" value="P-loop containing nucleoside triphosphate hydrolases"/>
    <property type="match status" value="1"/>
</dbReference>
<dbReference type="PROSITE" id="PS00152">
    <property type="entry name" value="ATPASE_ALPHA_BETA"/>
    <property type="match status" value="1"/>
</dbReference>
<name>AATA_ARCFU</name>
<evidence type="ECO:0000255" key="1">
    <source>
        <dbReference type="HAMAP-Rule" id="MF_00309"/>
    </source>
</evidence>
<accession>O29101</accession>
<comment type="function">
    <text evidence="1">Component of the A-type ATP synthase that produces ATP from ADP in the presence of a proton gradient across the membrane. The A chain is the catalytic subunit.</text>
</comment>
<comment type="catalytic activity">
    <reaction evidence="1">
        <text>ATP + H2O + 4 H(+)(in) = ADP + phosphate + 5 H(+)(out)</text>
        <dbReference type="Rhea" id="RHEA:57720"/>
        <dbReference type="ChEBI" id="CHEBI:15377"/>
        <dbReference type="ChEBI" id="CHEBI:15378"/>
        <dbReference type="ChEBI" id="CHEBI:30616"/>
        <dbReference type="ChEBI" id="CHEBI:43474"/>
        <dbReference type="ChEBI" id="CHEBI:456216"/>
        <dbReference type="EC" id="7.1.2.2"/>
    </reaction>
</comment>
<comment type="subunit">
    <text evidence="1">Has multiple subunits with at least A(3), B(3), C, D, E, F, H, I and proteolipid K(x).</text>
</comment>
<comment type="subcellular location">
    <subcellularLocation>
        <location evidence="1">Cell membrane</location>
        <topology evidence="1">Peripheral membrane protein</topology>
    </subcellularLocation>
</comment>
<comment type="similarity">
    <text evidence="1">Belongs to the ATPase alpha/beta chains family.</text>
</comment>
<sequence length="581" mass="64725">MEVKEAGYVGEIYRISGPLVVAEGLKARMYDLCKVGEEGLMGEVVGLVGQKVLIQVYEDTEGVKPGDKVENTGMPLSVELGPGLIRNIYDGVQRPLPVLKEVSGDFIGRGIEAPGLDRKAKWEFKPLVKKGEKVKPGEIIGTVQETEVVEQKILVPPNVKEGVIAEIYEGSFTVEDTIAVLEDGTELKLYHKWPVRIPRPYVEKLPPVVPLITGQRILDTFFPVAKGGTAAIPGPFGSGKTVTQHQLAKWSDAQIVVYIGCGERGNEMTEVLEEFPELEDPRTGKPLMERTVLVANTSNMPVAAREASVYTGITIAEYFRDMGYDVAIQADSTSRWAEAMREISGRLEEMPGEEGYPAYLASRLAEFYERAGRVKTLAGNIGSVTVVGAVSPPGGDFSEPVTQNTLRIVKVFWALDAKLAARRHFPAINWLQSYSLYVDTLKDWFAENVSEEWNELRRWAMEVLQEEANLQEIVQLVGSDALPESQRVLLEVARIIREVYLIQYAYHPVDTYCSVQKQYDMLKAIKQINDWFYQALEAGKTIDEIAGVEGLEEFARAKFEEDYKPAMEAALEKIRKNLLGE</sequence>
<gene>
    <name evidence="1" type="primary">atpA</name>
    <name type="ordered locus">AF_1166</name>
</gene>
<reference key="1">
    <citation type="journal article" date="1997" name="Nature">
        <title>The complete genome sequence of the hyperthermophilic, sulphate-reducing archaeon Archaeoglobus fulgidus.</title>
        <authorList>
            <person name="Klenk H.-P."/>
            <person name="Clayton R.A."/>
            <person name="Tomb J.-F."/>
            <person name="White O."/>
            <person name="Nelson K.E."/>
            <person name="Ketchum K.A."/>
            <person name="Dodson R.J."/>
            <person name="Gwinn M.L."/>
            <person name="Hickey E.K."/>
            <person name="Peterson J.D."/>
            <person name="Richardson D.L."/>
            <person name="Kerlavage A.R."/>
            <person name="Graham D.E."/>
            <person name="Kyrpides N.C."/>
            <person name="Fleischmann R.D."/>
            <person name="Quackenbush J."/>
            <person name="Lee N.H."/>
            <person name="Sutton G.G."/>
            <person name="Gill S.R."/>
            <person name="Kirkness E.F."/>
            <person name="Dougherty B.A."/>
            <person name="McKenney K."/>
            <person name="Adams M.D."/>
            <person name="Loftus B.J."/>
            <person name="Peterson S.N."/>
            <person name="Reich C.I."/>
            <person name="McNeil L.K."/>
            <person name="Badger J.H."/>
            <person name="Glodek A."/>
            <person name="Zhou L."/>
            <person name="Overbeek R."/>
            <person name="Gocayne J.D."/>
            <person name="Weidman J.F."/>
            <person name="McDonald L.A."/>
            <person name="Utterback T.R."/>
            <person name="Cotton M.D."/>
            <person name="Spriggs T."/>
            <person name="Artiach P."/>
            <person name="Kaine B.P."/>
            <person name="Sykes S.M."/>
            <person name="Sadow P.W."/>
            <person name="D'Andrea K.P."/>
            <person name="Bowman C."/>
            <person name="Fujii C."/>
            <person name="Garland S.A."/>
            <person name="Mason T.M."/>
            <person name="Olsen G.J."/>
            <person name="Fraser C.M."/>
            <person name="Smith H.O."/>
            <person name="Woese C.R."/>
            <person name="Venter J.C."/>
        </authorList>
    </citation>
    <scope>NUCLEOTIDE SEQUENCE [LARGE SCALE GENOMIC DNA]</scope>
    <source>
        <strain>ATCC 49558 / DSM 4304 / JCM 9628 / NBRC 100126 / VC-16</strain>
    </source>
</reference>
<organism>
    <name type="scientific">Archaeoglobus fulgidus (strain ATCC 49558 / DSM 4304 / JCM 9628 / NBRC 100126 / VC-16)</name>
    <dbReference type="NCBI Taxonomy" id="224325"/>
    <lineage>
        <taxon>Archaea</taxon>
        <taxon>Methanobacteriati</taxon>
        <taxon>Methanobacteriota</taxon>
        <taxon>Archaeoglobi</taxon>
        <taxon>Archaeoglobales</taxon>
        <taxon>Archaeoglobaceae</taxon>
        <taxon>Archaeoglobus</taxon>
    </lineage>
</organism>
<keyword id="KW-0066">ATP synthesis</keyword>
<keyword id="KW-0067">ATP-binding</keyword>
<keyword id="KW-1003">Cell membrane</keyword>
<keyword id="KW-0375">Hydrogen ion transport</keyword>
<keyword id="KW-0406">Ion transport</keyword>
<keyword id="KW-0472">Membrane</keyword>
<keyword id="KW-0547">Nucleotide-binding</keyword>
<keyword id="KW-1185">Reference proteome</keyword>
<keyword id="KW-1278">Translocase</keyword>
<keyword id="KW-0813">Transport</keyword>
<proteinExistence type="inferred from homology"/>